<accession>Q5WZE1</accession>
<reference key="1">
    <citation type="journal article" date="2004" name="Nat. Genet.">
        <title>Evidence in the Legionella pneumophila genome for exploitation of host cell functions and high genome plasticity.</title>
        <authorList>
            <person name="Cazalet C."/>
            <person name="Rusniok C."/>
            <person name="Brueggemann H."/>
            <person name="Zidane N."/>
            <person name="Magnier A."/>
            <person name="Ma L."/>
            <person name="Tichit M."/>
            <person name="Jarraud S."/>
            <person name="Bouchier C."/>
            <person name="Vandenesch F."/>
            <person name="Kunst F."/>
            <person name="Etienne J."/>
            <person name="Glaser P."/>
            <person name="Buchrieser C."/>
        </authorList>
    </citation>
    <scope>NUCLEOTIDE SEQUENCE [LARGE SCALE GENOMIC DNA]</scope>
    <source>
        <strain>Lens</strain>
    </source>
</reference>
<feature type="chain" id="PRO_0000163308" description="Ribosome maturation factor RimM">
    <location>
        <begin position="1"/>
        <end position="169"/>
    </location>
</feature>
<feature type="domain" description="PRC barrel" evidence="1">
    <location>
        <begin position="97"/>
        <end position="169"/>
    </location>
</feature>
<sequence length="169" mass="19244">MNNKTNWVIIGRFGRPHGIKGFVTVHSFTDPADNILRYNDWHVFLNKQWQPLKLLTIEVRSKAIIAQIEGYPERELVSALTNLDIGVQESQLAALAPGEYYWYQLIGMSVINSKGDLFGKVVEIMPTGSNDVLVVEGEKRHLIPYLPGQFVINIDESQQVITVDWDMNF</sequence>
<name>RIMM_LEGPL</name>
<gene>
    <name evidence="1" type="primary">rimM</name>
    <name type="ordered locus">lpl0441</name>
</gene>
<evidence type="ECO:0000255" key="1">
    <source>
        <dbReference type="HAMAP-Rule" id="MF_00014"/>
    </source>
</evidence>
<dbReference type="EMBL" id="CR628337">
    <property type="protein sequence ID" value="CAH14671.1"/>
    <property type="molecule type" value="Genomic_DNA"/>
</dbReference>
<dbReference type="RefSeq" id="WP_011213051.1">
    <property type="nucleotide sequence ID" value="NC_006369.1"/>
</dbReference>
<dbReference type="SMR" id="Q5WZE1"/>
<dbReference type="KEGG" id="lpf:lpl0441"/>
<dbReference type="LegioList" id="lpl0441"/>
<dbReference type="HOGENOM" id="CLU_077636_1_0_6"/>
<dbReference type="Proteomes" id="UP000002517">
    <property type="component" value="Chromosome"/>
</dbReference>
<dbReference type="GO" id="GO:0005737">
    <property type="term" value="C:cytoplasm"/>
    <property type="evidence" value="ECO:0007669"/>
    <property type="project" value="UniProtKB-SubCell"/>
</dbReference>
<dbReference type="GO" id="GO:0005840">
    <property type="term" value="C:ribosome"/>
    <property type="evidence" value="ECO:0007669"/>
    <property type="project" value="InterPro"/>
</dbReference>
<dbReference type="GO" id="GO:0043022">
    <property type="term" value="F:ribosome binding"/>
    <property type="evidence" value="ECO:0007669"/>
    <property type="project" value="InterPro"/>
</dbReference>
<dbReference type="GO" id="GO:0042274">
    <property type="term" value="P:ribosomal small subunit biogenesis"/>
    <property type="evidence" value="ECO:0007669"/>
    <property type="project" value="UniProtKB-UniRule"/>
</dbReference>
<dbReference type="GO" id="GO:0006364">
    <property type="term" value="P:rRNA processing"/>
    <property type="evidence" value="ECO:0007669"/>
    <property type="project" value="UniProtKB-UniRule"/>
</dbReference>
<dbReference type="Gene3D" id="2.30.30.240">
    <property type="entry name" value="PRC-barrel domain"/>
    <property type="match status" value="1"/>
</dbReference>
<dbReference type="Gene3D" id="2.40.30.60">
    <property type="entry name" value="RimM"/>
    <property type="match status" value="1"/>
</dbReference>
<dbReference type="HAMAP" id="MF_00014">
    <property type="entry name" value="Ribosome_mat_RimM"/>
    <property type="match status" value="1"/>
</dbReference>
<dbReference type="InterPro" id="IPR011033">
    <property type="entry name" value="PRC_barrel-like_sf"/>
</dbReference>
<dbReference type="InterPro" id="IPR056792">
    <property type="entry name" value="PRC_RimM"/>
</dbReference>
<dbReference type="InterPro" id="IPR011961">
    <property type="entry name" value="RimM"/>
</dbReference>
<dbReference type="InterPro" id="IPR002676">
    <property type="entry name" value="RimM_N"/>
</dbReference>
<dbReference type="InterPro" id="IPR036976">
    <property type="entry name" value="RimM_N_sf"/>
</dbReference>
<dbReference type="InterPro" id="IPR009000">
    <property type="entry name" value="Transl_B-barrel_sf"/>
</dbReference>
<dbReference type="NCBIfam" id="TIGR02273">
    <property type="entry name" value="16S_RimM"/>
    <property type="match status" value="1"/>
</dbReference>
<dbReference type="PANTHER" id="PTHR33692">
    <property type="entry name" value="RIBOSOME MATURATION FACTOR RIMM"/>
    <property type="match status" value="1"/>
</dbReference>
<dbReference type="PANTHER" id="PTHR33692:SF1">
    <property type="entry name" value="RIBOSOME MATURATION FACTOR RIMM"/>
    <property type="match status" value="1"/>
</dbReference>
<dbReference type="Pfam" id="PF24986">
    <property type="entry name" value="PRC_RimM"/>
    <property type="match status" value="1"/>
</dbReference>
<dbReference type="Pfam" id="PF01782">
    <property type="entry name" value="RimM"/>
    <property type="match status" value="1"/>
</dbReference>
<dbReference type="SUPFAM" id="SSF50346">
    <property type="entry name" value="PRC-barrel domain"/>
    <property type="match status" value="1"/>
</dbReference>
<dbReference type="SUPFAM" id="SSF50447">
    <property type="entry name" value="Translation proteins"/>
    <property type="match status" value="1"/>
</dbReference>
<comment type="function">
    <text evidence="1">An accessory protein needed during the final step in the assembly of 30S ribosomal subunit, possibly for assembly of the head region. Essential for efficient processing of 16S rRNA. May be needed both before and after RbfA during the maturation of 16S rRNA. It has affinity for free ribosomal 30S subunits but not for 70S ribosomes.</text>
</comment>
<comment type="subunit">
    <text evidence="1">Binds ribosomal protein uS19.</text>
</comment>
<comment type="subcellular location">
    <subcellularLocation>
        <location evidence="1">Cytoplasm</location>
    </subcellularLocation>
</comment>
<comment type="domain">
    <text evidence="1">The PRC barrel domain binds ribosomal protein uS19.</text>
</comment>
<comment type="similarity">
    <text evidence="1">Belongs to the RimM family.</text>
</comment>
<organism>
    <name type="scientific">Legionella pneumophila (strain Lens)</name>
    <dbReference type="NCBI Taxonomy" id="297245"/>
    <lineage>
        <taxon>Bacteria</taxon>
        <taxon>Pseudomonadati</taxon>
        <taxon>Pseudomonadota</taxon>
        <taxon>Gammaproteobacteria</taxon>
        <taxon>Legionellales</taxon>
        <taxon>Legionellaceae</taxon>
        <taxon>Legionella</taxon>
    </lineage>
</organism>
<protein>
    <recommendedName>
        <fullName evidence="1">Ribosome maturation factor RimM</fullName>
    </recommendedName>
</protein>
<keyword id="KW-0143">Chaperone</keyword>
<keyword id="KW-0963">Cytoplasm</keyword>
<keyword id="KW-0690">Ribosome biogenesis</keyword>
<keyword id="KW-0698">rRNA processing</keyword>
<proteinExistence type="inferred from homology"/>